<feature type="peptide" id="PRO_0000421491" description="Extended FMRFamide-2" evidence="3">
    <location>
        <begin position="1"/>
        <end position="9"/>
    </location>
</feature>
<feature type="unsure residue" description="L or I" evidence="3">
    <location>
        <position position="4"/>
    </location>
</feature>
<feature type="unsure residue" description="L or I" evidence="3">
    <location>
        <position position="6"/>
    </location>
</feature>
<reference evidence="5" key="1">
    <citation type="journal article" date="2012" name="Syst. Biol.">
        <title>Peptidomics-based phylogeny and biogeography of Mantophasmatodea (Hexapoda).</title>
        <authorList>
            <person name="Predel R."/>
            <person name="Neupert S."/>
            <person name="Huetteroth W."/>
            <person name="Kahnt J."/>
            <person name="Waidelich D."/>
            <person name="Roth S."/>
        </authorList>
    </citation>
    <scope>PROTEIN SEQUENCE</scope>
    <source>
        <tissue evidence="3">Thoracic perisympathetic organs</tissue>
    </source>
</reference>
<dbReference type="GO" id="GO:0005576">
    <property type="term" value="C:extracellular region"/>
    <property type="evidence" value="ECO:0007669"/>
    <property type="project" value="UniProtKB-SubCell"/>
</dbReference>
<dbReference type="GO" id="GO:0007218">
    <property type="term" value="P:neuropeptide signaling pathway"/>
    <property type="evidence" value="ECO:0007669"/>
    <property type="project" value="UniProtKB-KW"/>
</dbReference>
<name>FAR2_PRAMA</name>
<organism>
    <name type="scientific">Praedatophasma maraisi</name>
    <name type="common">Gladiator</name>
    <name type="synonym">Heel-walker</name>
    <dbReference type="NCBI Taxonomy" id="409170"/>
    <lineage>
        <taxon>Eukaryota</taxon>
        <taxon>Metazoa</taxon>
        <taxon>Ecdysozoa</taxon>
        <taxon>Arthropoda</taxon>
        <taxon>Hexapoda</taxon>
        <taxon>Insecta</taxon>
        <taxon>Pterygota</taxon>
        <taxon>Neoptera</taxon>
        <taxon>Polyneoptera</taxon>
        <taxon>Mantophasmatodea</taxon>
        <taxon>Mantophasmatidae</taxon>
        <taxon>Praedatophasma</taxon>
    </lineage>
</organism>
<comment type="function">
    <text evidence="1">FMRFamides and FMRFamide-like peptides are neuropeptides.</text>
</comment>
<comment type="subcellular location">
    <subcellularLocation>
        <location evidence="6">Secreted</location>
    </subcellularLocation>
</comment>
<comment type="similarity">
    <text evidence="2">Belongs to the FARP (FMRF amide related peptide) family.</text>
</comment>
<accession>B3A0F9</accession>
<keyword id="KW-0903">Direct protein sequencing</keyword>
<keyword id="KW-0527">Neuropeptide</keyword>
<keyword id="KW-0964">Secreted</keyword>
<proteinExistence type="evidence at protein level"/>
<evidence type="ECO:0000250" key="1">
    <source>
        <dbReference type="UniProtKB" id="P34405"/>
    </source>
</evidence>
<evidence type="ECO:0000255" key="2"/>
<evidence type="ECO:0000269" key="3">
    <source>
    </source>
</evidence>
<evidence type="ECO:0000303" key="4">
    <source>
    </source>
</evidence>
<evidence type="ECO:0000305" key="5"/>
<evidence type="ECO:0000305" key="6">
    <source>
    </source>
</evidence>
<sequence>ADYLQLTRA</sequence>
<protein>
    <recommendedName>
        <fullName evidence="4">Extended FMRFamide-2</fullName>
        <shortName evidence="4">FMRFa-2</shortName>
    </recommendedName>
</protein>